<protein>
    <recommendedName>
        <fullName>Uncharacterized protein ML0605</fullName>
    </recommendedName>
</protein>
<reference key="1">
    <citation type="submission" date="1994-03" db="EMBL/GenBank/DDBJ databases">
        <authorList>
            <person name="Smith D.R."/>
            <person name="Robison K."/>
        </authorList>
    </citation>
    <scope>NUCLEOTIDE SEQUENCE [GENOMIC DNA]</scope>
</reference>
<reference key="2">
    <citation type="journal article" date="2001" name="Nature">
        <title>Massive gene decay in the leprosy bacillus.</title>
        <authorList>
            <person name="Cole S.T."/>
            <person name="Eiglmeier K."/>
            <person name="Parkhill J."/>
            <person name="James K.D."/>
            <person name="Thomson N.R."/>
            <person name="Wheeler P.R."/>
            <person name="Honore N."/>
            <person name="Garnier T."/>
            <person name="Churcher C.M."/>
            <person name="Harris D.E."/>
            <person name="Mungall K.L."/>
            <person name="Basham D."/>
            <person name="Brown D."/>
            <person name="Chillingworth T."/>
            <person name="Connor R."/>
            <person name="Davies R.M."/>
            <person name="Devlin K."/>
            <person name="Duthoy S."/>
            <person name="Feltwell T."/>
            <person name="Fraser A."/>
            <person name="Hamlin N."/>
            <person name="Holroyd S."/>
            <person name="Hornsby T."/>
            <person name="Jagels K."/>
            <person name="Lacroix C."/>
            <person name="Maclean J."/>
            <person name="Moule S."/>
            <person name="Murphy L.D."/>
            <person name="Oliver K."/>
            <person name="Quail M.A."/>
            <person name="Rajandream M.A."/>
            <person name="Rutherford K.M."/>
            <person name="Rutter S."/>
            <person name="Seeger K."/>
            <person name="Simon S."/>
            <person name="Simmonds M."/>
            <person name="Skelton J."/>
            <person name="Squares R."/>
            <person name="Squares S."/>
            <person name="Stevens K."/>
            <person name="Taylor K."/>
            <person name="Whitehead S."/>
            <person name="Woodward J.R."/>
            <person name="Barrell B.G."/>
        </authorList>
    </citation>
    <scope>NUCLEOTIDE SEQUENCE [LARGE SCALE GENOMIC DNA]</scope>
    <source>
        <strain>TN</strain>
    </source>
</reference>
<name>Y605_MYCLE</name>
<gene>
    <name type="ordered locus">ML0605</name>
    <name type="ORF">B1937_F1_4</name>
    <name type="ORF">MLCL536.05c</name>
    <name type="ORF">u1937b</name>
</gene>
<proteinExistence type="predicted"/>
<evidence type="ECO:0000256" key="1">
    <source>
        <dbReference type="SAM" id="MobiDB-lite"/>
    </source>
</evidence>
<evidence type="ECO:0000305" key="2"/>
<keyword id="KW-1185">Reference proteome</keyword>
<organism>
    <name type="scientific">Mycobacterium leprae (strain TN)</name>
    <dbReference type="NCBI Taxonomy" id="272631"/>
    <lineage>
        <taxon>Bacteria</taxon>
        <taxon>Bacillati</taxon>
        <taxon>Actinomycetota</taxon>
        <taxon>Actinomycetes</taxon>
        <taxon>Mycobacteriales</taxon>
        <taxon>Mycobacteriaceae</taxon>
        <taxon>Mycobacterium</taxon>
    </lineage>
</organism>
<sequence>MSQVSLPSQLKETGPRLQSRCRSSARSERIFGGYNTSDIYSMAFDEMFDVQGNVRGPYKGIYAELAPSDASELKARAEALARAFIDQGITFSLSGQERPFPLDLVPRVISASEWSRLERGITQRVKALEMYLDDIYGDQEILRDGVIPRRLITSCEHFHRQAVGIIPPNGVRIHVAGIDLIRDDSGNFRVLEDNLRSPSGVSYVMENRRTIARVFPNLFATHRVRAVDDYASHLLRALRNSAATNEADPTVVVLTPGVANAAYFEHSLLARQMGVELVEGRDLFCRDNQVYMCTTEGERQVDVIYRRIDDAFLDPLQFRADSVLGVAGLVNAARAGNVVISSAIGNGVGDDKLVYTYVPTMMEYYLREKPLLANVDTLRCWLDDERQEVLDRIHDLVLKPVEGSGGYGIVFGPDASEKELAAASKKIRDDPRSWIAQPVMELSTVPTQVGSTLAPRYVDLRPFAVNDGNDVWVLPGGLTRVALVEGSRVVNSSQGGGSKDTWVLAPHASYGARELGAAEIVCSLPQSSPDPVPDGSPRPKQQPQQAQAEQAQQPQQQIMLP</sequence>
<dbReference type="EMBL" id="U00016">
    <property type="protein sequence ID" value="AAA17160.1"/>
    <property type="status" value="ALT_INIT"/>
    <property type="molecule type" value="Genomic_DNA"/>
</dbReference>
<dbReference type="EMBL" id="Z99125">
    <property type="protein sequence ID" value="CAB16148.1"/>
    <property type="molecule type" value="Genomic_DNA"/>
</dbReference>
<dbReference type="EMBL" id="AL583919">
    <property type="protein sequence ID" value="CAC30113.1"/>
    <property type="molecule type" value="Genomic_DNA"/>
</dbReference>
<dbReference type="PIR" id="T10046">
    <property type="entry name" value="T10046"/>
</dbReference>
<dbReference type="RefSeq" id="NP_301510.1">
    <property type="nucleotide sequence ID" value="NC_002677.1"/>
</dbReference>
<dbReference type="RefSeq" id="WP_010907834.1">
    <property type="nucleotide sequence ID" value="NC_002677.1"/>
</dbReference>
<dbReference type="SMR" id="Q49755"/>
<dbReference type="STRING" id="272631.gene:17574426"/>
<dbReference type="KEGG" id="mle:ML0605"/>
<dbReference type="PATRIC" id="fig|272631.5.peg.1063"/>
<dbReference type="Leproma" id="ML0605"/>
<dbReference type="eggNOG" id="COG2308">
    <property type="taxonomic scope" value="Bacteria"/>
</dbReference>
<dbReference type="HOGENOM" id="CLU_017048_2_1_11"/>
<dbReference type="OrthoDB" id="9803842at2"/>
<dbReference type="Proteomes" id="UP000000806">
    <property type="component" value="Chromosome"/>
</dbReference>
<dbReference type="Gene3D" id="3.30.1490.270">
    <property type="match status" value="1"/>
</dbReference>
<dbReference type="Gene3D" id="3.40.50.11290">
    <property type="match status" value="1"/>
</dbReference>
<dbReference type="InterPro" id="IPR051680">
    <property type="entry name" value="ATP-dep_Glu-Cys_Ligase-2"/>
</dbReference>
<dbReference type="InterPro" id="IPR007302">
    <property type="entry name" value="CP_ATPgrasp"/>
</dbReference>
<dbReference type="InterPro" id="IPR016450">
    <property type="entry name" value="UCP005522"/>
</dbReference>
<dbReference type="PANTHER" id="PTHR34595">
    <property type="entry name" value="BLR5612 PROTEIN"/>
    <property type="match status" value="1"/>
</dbReference>
<dbReference type="PANTHER" id="PTHR34595:SF7">
    <property type="entry name" value="SLL1039 PROTEIN"/>
    <property type="match status" value="1"/>
</dbReference>
<dbReference type="Pfam" id="PF04174">
    <property type="entry name" value="CP_ATPgrasp_1"/>
    <property type="match status" value="1"/>
</dbReference>
<dbReference type="PIRSF" id="PIRSF005522">
    <property type="entry name" value="UCP005522"/>
    <property type="match status" value="1"/>
</dbReference>
<dbReference type="SUPFAM" id="SSF56059">
    <property type="entry name" value="Glutathione synthetase ATP-binding domain-like"/>
    <property type="match status" value="1"/>
</dbReference>
<feature type="chain" id="PRO_0000104034" description="Uncharacterized protein ML0605">
    <location>
        <begin position="1"/>
        <end position="561"/>
    </location>
</feature>
<feature type="region of interest" description="Disordered" evidence="1">
    <location>
        <begin position="1"/>
        <end position="22"/>
    </location>
</feature>
<feature type="region of interest" description="Disordered" evidence="1">
    <location>
        <begin position="522"/>
        <end position="561"/>
    </location>
</feature>
<feature type="compositionally biased region" description="Polar residues" evidence="1">
    <location>
        <begin position="1"/>
        <end position="11"/>
    </location>
</feature>
<feature type="compositionally biased region" description="Low complexity" evidence="1">
    <location>
        <begin position="541"/>
        <end position="561"/>
    </location>
</feature>
<accession>Q49755</accession>
<accession>O33131</accession>
<comment type="similarity">
    <text evidence="2">To Synechocystis PCC 6803 sll0335 and to M.tuberculosis Rv2567.</text>
</comment>
<comment type="sequence caution" evidence="2">
    <conflict type="erroneous initiation">
        <sequence resource="EMBL-CDS" id="AAA17160"/>
    </conflict>
</comment>